<accession>O54697</accession>
<reference key="1">
    <citation type="journal article" date="1997" name="J. Biol. Chem.">
        <title>Cloning and characterization of a novel peptidase from rat and human ileum.</title>
        <authorList>
            <person name="Shneider B.L."/>
            <person name="Thevananther S."/>
            <person name="Moyer M.S."/>
            <person name="Walters H.C."/>
            <person name="Rinaldo P."/>
            <person name="Devarajan P."/>
            <person name="Sun A.Q."/>
            <person name="Dawson P.A."/>
            <person name="Ananthanarayanan M."/>
        </authorList>
    </citation>
    <scope>NUCLEOTIDE SEQUENCE [MRNA]</scope>
    <scope>PROTEIN SEQUENCE OF 4-17</scope>
    <scope>SUBCELLULAR LOCATION</scope>
    <scope>GLYCOSYLATION</scope>
    <scope>TISSUE SPECIFICITY</scope>
    <source>
        <strain>Sprague-Dawley</strain>
        <tissue>Ileum</tissue>
    </source>
</reference>
<evidence type="ECO:0000250" key="1">
    <source>
        <dbReference type="UniProtKB" id="Q9UQQ1"/>
    </source>
</evidence>
<evidence type="ECO:0000255" key="2"/>
<evidence type="ECO:0000269" key="3">
    <source>
    </source>
</evidence>
<evidence type="ECO:0000303" key="4">
    <source>
    </source>
</evidence>
<evidence type="ECO:0000305" key="5"/>
<evidence type="ECO:0000305" key="6">
    <source>
    </source>
</evidence>
<feature type="chain" id="PRO_0000174125" description="Aminopeptidase NAALADL1">
    <location>
        <begin position="1"/>
        <end position="745"/>
    </location>
</feature>
<feature type="topological domain" description="Cytoplasmic" evidence="2">
    <location>
        <begin position="1"/>
        <end position="6"/>
    </location>
</feature>
<feature type="transmembrane region" description="Helical; Signal-anchor for type II membrane protein" evidence="2">
    <location>
        <begin position="7"/>
        <end position="28"/>
    </location>
</feature>
<feature type="topological domain" description="Extracellular" evidence="2">
    <location>
        <begin position="29"/>
        <end position="745"/>
    </location>
</feature>
<feature type="active site" description="Proton donor/acceptor" evidence="1">
    <location>
        <position position="421"/>
    </location>
</feature>
<feature type="binding site" evidence="1">
    <location>
        <position position="263"/>
    </location>
    <ligand>
        <name>Ca(2+)</name>
        <dbReference type="ChEBI" id="CHEBI:29108"/>
    </ligand>
</feature>
<feature type="binding site" evidence="1">
    <location>
        <position position="266"/>
    </location>
    <ligand>
        <name>Ca(2+)</name>
        <dbReference type="ChEBI" id="CHEBI:29108"/>
    </ligand>
</feature>
<feature type="binding site" evidence="1">
    <location>
        <position position="373"/>
    </location>
    <ligand>
        <name>Zn(2+)</name>
        <dbReference type="ChEBI" id="CHEBI:29105"/>
        <label>1</label>
    </ligand>
</feature>
<feature type="binding site" evidence="1">
    <location>
        <position position="383"/>
    </location>
    <ligand>
        <name>Zn(2+)</name>
        <dbReference type="ChEBI" id="CHEBI:29105"/>
        <label>1</label>
    </ligand>
</feature>
<feature type="binding site" evidence="1">
    <location>
        <position position="383"/>
    </location>
    <ligand>
        <name>Zn(2+)</name>
        <dbReference type="ChEBI" id="CHEBI:29105"/>
        <label>2</label>
    </ligand>
</feature>
<feature type="binding site" evidence="1">
    <location>
        <position position="422"/>
    </location>
    <ligand>
        <name>Zn(2+)</name>
        <dbReference type="ChEBI" id="CHEBI:29105"/>
        <label>2</label>
    </ligand>
</feature>
<feature type="binding site" evidence="1">
    <location>
        <position position="430"/>
    </location>
    <ligand>
        <name>Ca(2+)</name>
        <dbReference type="ChEBI" id="CHEBI:29108"/>
    </ligand>
</feature>
<feature type="binding site" evidence="1">
    <location>
        <position position="433"/>
    </location>
    <ligand>
        <name>Ca(2+)</name>
        <dbReference type="ChEBI" id="CHEBI:29108"/>
    </ligand>
</feature>
<feature type="binding site" evidence="1">
    <location>
        <position position="450"/>
    </location>
    <ligand>
        <name>Zn(2+)</name>
        <dbReference type="ChEBI" id="CHEBI:29105"/>
        <label>1</label>
    </ligand>
</feature>
<feature type="binding site" evidence="1">
    <location>
        <position position="550"/>
    </location>
    <ligand>
        <name>Zn(2+)</name>
        <dbReference type="ChEBI" id="CHEBI:29105"/>
        <label>2</label>
    </ligand>
</feature>
<feature type="glycosylation site" description="N-linked (GlcNAc...) asparagine" evidence="2">
    <location>
        <position position="128"/>
    </location>
</feature>
<feature type="glycosylation site" description="N-linked (GlcNAc...) asparagine" evidence="2">
    <location>
        <position position="141"/>
    </location>
</feature>
<feature type="glycosylation site" description="N-linked (GlcNAc...) asparagine" evidence="2">
    <location>
        <position position="235"/>
    </location>
</feature>
<feature type="glycosylation site" description="N-linked (GlcNAc...) asparagine" evidence="2">
    <location>
        <position position="279"/>
    </location>
</feature>
<feature type="glycosylation site" description="N-linked (GlcNAc...) asparagine" evidence="2">
    <location>
        <position position="304"/>
    </location>
</feature>
<feature type="glycosylation site" description="N-linked (GlcNAc...) asparagine" evidence="2">
    <location>
        <position position="350"/>
    </location>
</feature>
<feature type="glycosylation site" description="N-linked (GlcNAc...) asparagine" evidence="2">
    <location>
        <position position="456"/>
    </location>
</feature>
<feature type="glycosylation site" description="N-linked (GlcNAc...) asparagine" evidence="2">
    <location>
        <position position="497"/>
    </location>
</feature>
<feature type="glycosylation site" description="N-linked (GlcNAc...) asparagine" evidence="2">
    <location>
        <position position="593"/>
    </location>
</feature>
<feature type="glycosylation site" description="N-linked (GlcNAc...) asparagine" evidence="2">
    <location>
        <position position="620"/>
    </location>
</feature>
<feature type="disulfide bond" evidence="1">
    <location>
        <begin position="301"/>
        <end position="318"/>
    </location>
</feature>
<proteinExistence type="evidence at protein level"/>
<protein>
    <recommendedName>
        <fullName evidence="5">Aminopeptidase NAALADL1</fullName>
        <ecNumber evidence="1">3.4.11.-</ecNumber>
    </recommendedName>
    <alternativeName>
        <fullName evidence="4">100 kDa ileum brush border membrane protein</fullName>
        <shortName evidence="4">I100</shortName>
    </alternativeName>
    <alternativeName>
        <fullName>Ileal dipeptidylpeptidase</fullName>
    </alternativeName>
    <alternativeName>
        <fullName>N-acetylated-alpha-linked acidic dipeptidase-like protein</fullName>
        <shortName>NAALADase L</shortName>
    </alternativeName>
</protein>
<gene>
    <name type="primary">Naaladl1</name>
    <name type="synonym">Naaladl</name>
</gene>
<dbReference type="EC" id="3.4.11.-" evidence="1"/>
<dbReference type="EMBL" id="AF009921">
    <property type="protein sequence ID" value="AAB87644.1"/>
    <property type="molecule type" value="mRNA"/>
</dbReference>
<dbReference type="RefSeq" id="NP_113947.1">
    <property type="nucleotide sequence ID" value="NM_031759.2"/>
</dbReference>
<dbReference type="SMR" id="O54697"/>
<dbReference type="FunCoup" id="O54697">
    <property type="interactions" value="6"/>
</dbReference>
<dbReference type="STRING" id="10116.ENSRNOP00000051719"/>
<dbReference type="MEROPS" id="M28.011"/>
<dbReference type="GlyCosmos" id="O54697">
    <property type="glycosylation" value="10 sites, No reported glycans"/>
</dbReference>
<dbReference type="GlyGen" id="O54697">
    <property type="glycosylation" value="10 sites"/>
</dbReference>
<dbReference type="iPTMnet" id="O54697"/>
<dbReference type="PhosphoSitePlus" id="O54697"/>
<dbReference type="PaxDb" id="10116-ENSRNOP00000051719"/>
<dbReference type="Ensembl" id="ENSRNOT00000054835.4">
    <property type="protein sequence ID" value="ENSRNOP00000051719.3"/>
    <property type="gene ID" value="ENSRNOG00000021000.7"/>
</dbReference>
<dbReference type="GeneID" id="83568"/>
<dbReference type="KEGG" id="rno:83568"/>
<dbReference type="UCSC" id="RGD:620987">
    <property type="organism name" value="rat"/>
</dbReference>
<dbReference type="AGR" id="RGD:620987"/>
<dbReference type="CTD" id="10004"/>
<dbReference type="RGD" id="620987">
    <property type="gene designation" value="Naaladl1"/>
</dbReference>
<dbReference type="eggNOG" id="KOG2195">
    <property type="taxonomic scope" value="Eukaryota"/>
</dbReference>
<dbReference type="GeneTree" id="ENSGT01030000234598"/>
<dbReference type="HOGENOM" id="CLU_005688_3_2_1"/>
<dbReference type="InParanoid" id="O54697"/>
<dbReference type="OrthoDB" id="23449at9989"/>
<dbReference type="PhylomeDB" id="O54697"/>
<dbReference type="PRO" id="PR:O54697"/>
<dbReference type="Proteomes" id="UP000002494">
    <property type="component" value="Chromosome 1"/>
</dbReference>
<dbReference type="Bgee" id="ENSRNOG00000021000">
    <property type="expression patterns" value="Expressed in jejunum and 13 other cell types or tissues"/>
</dbReference>
<dbReference type="GO" id="GO:0016324">
    <property type="term" value="C:apical plasma membrane"/>
    <property type="evidence" value="ECO:0000314"/>
    <property type="project" value="UniProtKB"/>
</dbReference>
<dbReference type="GO" id="GO:0016020">
    <property type="term" value="C:membrane"/>
    <property type="evidence" value="ECO:0000314"/>
    <property type="project" value="UniProtKB"/>
</dbReference>
<dbReference type="GO" id="GO:0004177">
    <property type="term" value="F:aminopeptidase activity"/>
    <property type="evidence" value="ECO:0000250"/>
    <property type="project" value="UniProtKB"/>
</dbReference>
<dbReference type="GO" id="GO:0005509">
    <property type="term" value="F:calcium ion binding"/>
    <property type="evidence" value="ECO:0000250"/>
    <property type="project" value="UniProtKB"/>
</dbReference>
<dbReference type="GO" id="GO:0004180">
    <property type="term" value="F:carboxypeptidase activity"/>
    <property type="evidence" value="ECO:0000318"/>
    <property type="project" value="GO_Central"/>
</dbReference>
<dbReference type="GO" id="GO:0008237">
    <property type="term" value="F:metallopeptidase activity"/>
    <property type="evidence" value="ECO:0007669"/>
    <property type="project" value="UniProtKB-KW"/>
</dbReference>
<dbReference type="GO" id="GO:0042803">
    <property type="term" value="F:protein homodimerization activity"/>
    <property type="evidence" value="ECO:0000250"/>
    <property type="project" value="UniProtKB"/>
</dbReference>
<dbReference type="GO" id="GO:0008270">
    <property type="term" value="F:zinc ion binding"/>
    <property type="evidence" value="ECO:0000250"/>
    <property type="project" value="UniProtKB"/>
</dbReference>
<dbReference type="GO" id="GO:0043171">
    <property type="term" value="P:peptide catabolic process"/>
    <property type="evidence" value="ECO:0000250"/>
    <property type="project" value="UniProtKB"/>
</dbReference>
<dbReference type="GO" id="GO:0006508">
    <property type="term" value="P:proteolysis"/>
    <property type="evidence" value="ECO:0007669"/>
    <property type="project" value="UniProtKB-KW"/>
</dbReference>
<dbReference type="CDD" id="cd08022">
    <property type="entry name" value="M28_PSMA_like"/>
    <property type="match status" value="1"/>
</dbReference>
<dbReference type="CDD" id="cd02121">
    <property type="entry name" value="PA_GCPII_like"/>
    <property type="match status" value="1"/>
</dbReference>
<dbReference type="FunFam" id="3.40.630.10:FF:000101">
    <property type="entry name" value="N-acetylated alpha-linked acidic dipeptidase like 1"/>
    <property type="match status" value="2"/>
</dbReference>
<dbReference type="FunFam" id="3.50.30.30:FF:000021">
    <property type="entry name" value="N-acetylated alpha-linked acidic dipeptidase-like 1"/>
    <property type="match status" value="1"/>
</dbReference>
<dbReference type="FunFam" id="1.20.930.40:FF:000001">
    <property type="entry name" value="N-acetylated-alpha-linked acidic dipeptidase 2"/>
    <property type="match status" value="1"/>
</dbReference>
<dbReference type="Gene3D" id="3.50.30.30">
    <property type="match status" value="1"/>
</dbReference>
<dbReference type="Gene3D" id="1.20.930.40">
    <property type="entry name" value="Transferrin receptor-like, dimerisation domain"/>
    <property type="match status" value="1"/>
</dbReference>
<dbReference type="Gene3D" id="3.40.630.10">
    <property type="entry name" value="Zn peptidases"/>
    <property type="match status" value="1"/>
</dbReference>
<dbReference type="InterPro" id="IPR046450">
    <property type="entry name" value="PA_dom_sf"/>
</dbReference>
<dbReference type="InterPro" id="IPR003137">
    <property type="entry name" value="PA_domain"/>
</dbReference>
<dbReference type="InterPro" id="IPR007484">
    <property type="entry name" value="Peptidase_M28"/>
</dbReference>
<dbReference type="InterPro" id="IPR039373">
    <property type="entry name" value="Peptidase_M28B"/>
</dbReference>
<dbReference type="InterPro" id="IPR007365">
    <property type="entry name" value="TFR-like_dimer_dom"/>
</dbReference>
<dbReference type="InterPro" id="IPR036757">
    <property type="entry name" value="TFR-like_dimer_dom_sf"/>
</dbReference>
<dbReference type="PANTHER" id="PTHR10404:SF50">
    <property type="entry name" value="AMINOPEPTIDASE NAALADL1"/>
    <property type="match status" value="1"/>
</dbReference>
<dbReference type="PANTHER" id="PTHR10404">
    <property type="entry name" value="N-ACETYLATED-ALPHA-LINKED ACIDIC DIPEPTIDASE"/>
    <property type="match status" value="1"/>
</dbReference>
<dbReference type="Pfam" id="PF02225">
    <property type="entry name" value="PA"/>
    <property type="match status" value="1"/>
</dbReference>
<dbReference type="Pfam" id="PF04389">
    <property type="entry name" value="Peptidase_M28"/>
    <property type="match status" value="1"/>
</dbReference>
<dbReference type="Pfam" id="PF04253">
    <property type="entry name" value="TFR_dimer"/>
    <property type="match status" value="1"/>
</dbReference>
<dbReference type="SUPFAM" id="SSF52025">
    <property type="entry name" value="PA domain"/>
    <property type="match status" value="1"/>
</dbReference>
<dbReference type="SUPFAM" id="SSF47672">
    <property type="entry name" value="Transferrin receptor-like dimerisation domain"/>
    <property type="match status" value="1"/>
</dbReference>
<dbReference type="SUPFAM" id="SSF53187">
    <property type="entry name" value="Zn-dependent exopeptidases"/>
    <property type="match status" value="1"/>
</dbReference>
<comment type="function">
    <text evidence="1">Aminopeptidase with broad substrate specificity. Has lower activity with substrates that have Asp or Glu in the P2' position, or Pro in the P3' position. Lacks activity with substrates that have both Pro in the P3' position and Asp or Glu in the P2' position. Lacks carboxypeptidase activity. Lacks dipeptidyl-peptidase IV type activity.</text>
</comment>
<comment type="cofactor">
    <cofactor evidence="1">
        <name>Zn(2+)</name>
        <dbReference type="ChEBI" id="CHEBI:29105"/>
    </cofactor>
    <text evidence="1">Binds 2 Zn(2+) ions per subunit.</text>
</comment>
<comment type="subunit">
    <text evidence="1">Homodimer.</text>
</comment>
<comment type="subcellular location">
    <subcellularLocation>
        <location evidence="3">Apical cell membrane</location>
        <topology evidence="6">Single-pass type II membrane protein</topology>
    </subcellularLocation>
    <text evidence="3">Ileal brush border membrane.</text>
</comment>
<comment type="tissue specificity">
    <text evidence="3">Detected on apical villi on the brush border membrane of ileum enterocytes (at protein level) (PubMed:9388249). Mainly expressed in the distal small intestine (PubMed:9388249).</text>
</comment>
<comment type="PTM">
    <text evidence="3">N-glycosylated.</text>
</comment>
<comment type="similarity">
    <text evidence="5">Belongs to the peptidase M28 family. M28B subfamily.</text>
</comment>
<sequence length="745" mass="80641">MHWAKILGVGIGAAALLGLGIILGHFAIPKATEPLASSVSDSQDLDLAILDSVMGQLDASRIRENLRELSKEPHVATSARDEALVQLLLGRWKDSASGLDTAKTYEYTVLLSFPSTEQPNSVEVVGPNGTVFHSFQPFEKNLTGEQAEPNVLQPYAAYAPPGTPKGPLVYANRGSEDDFKKLEAEGINLKGTIALTRYGSVGRGAKAINAARHGVVGVLVYTDPGDINDGKSLPNETFPNSWGLPPSGVERGSYYEYFGDPLTPYLPAHPVSFRLDPHNISGFPPIPTQPIGFEDAKNLLCNLNGTSAPDSWQGALGCEYKLGPGFEPNGNFPAGSEVKVSVYNRLELRNSSNVLGIIQGAVEPDRYVIYGNHRDSWVHGAVDPSSGTAVLLEISRVLGTLLKKGTWRPRRSIIFASWGAEEFGLIGSTEFTEEFLSKLQERTVTYINVDISVFSNATLRAQGTPPVQSVIFSATKEISAPGSSGLSIYDNWIRYTNRSSPVYGLVPSMGTLGAGSDYASFIHFLGITSMDLAYTYDRSKTSARIYPTYHTAFDTFDYVEKFLDPGFSSHQAVARTAGSVLLRLSDSLFLPLNVSDYSETLQSFLQAAQENLGALLESHNISLGPLVTAVEKFKAAAAALNQHILTLQKSSPDPLQVRMVNDQLMLLERAFLNPRAFPEERYYSHVLWAPNTASVATFPGLANAYARAQEINSGAEAWAEVERQLSIAVMALEGAAATLQPVTDL</sequence>
<name>NALDL_RAT</name>
<keyword id="KW-0031">Aminopeptidase</keyword>
<keyword id="KW-0106">Calcium</keyword>
<keyword id="KW-1003">Cell membrane</keyword>
<keyword id="KW-0903">Direct protein sequencing</keyword>
<keyword id="KW-1015">Disulfide bond</keyword>
<keyword id="KW-0325">Glycoprotein</keyword>
<keyword id="KW-0378">Hydrolase</keyword>
<keyword id="KW-0472">Membrane</keyword>
<keyword id="KW-0479">Metal-binding</keyword>
<keyword id="KW-0482">Metalloprotease</keyword>
<keyword id="KW-0645">Protease</keyword>
<keyword id="KW-1185">Reference proteome</keyword>
<keyword id="KW-0735">Signal-anchor</keyword>
<keyword id="KW-0812">Transmembrane</keyword>
<keyword id="KW-1133">Transmembrane helix</keyword>
<keyword id="KW-0862">Zinc</keyword>
<organism>
    <name type="scientific">Rattus norvegicus</name>
    <name type="common">Rat</name>
    <dbReference type="NCBI Taxonomy" id="10116"/>
    <lineage>
        <taxon>Eukaryota</taxon>
        <taxon>Metazoa</taxon>
        <taxon>Chordata</taxon>
        <taxon>Craniata</taxon>
        <taxon>Vertebrata</taxon>
        <taxon>Euteleostomi</taxon>
        <taxon>Mammalia</taxon>
        <taxon>Eutheria</taxon>
        <taxon>Euarchontoglires</taxon>
        <taxon>Glires</taxon>
        <taxon>Rodentia</taxon>
        <taxon>Myomorpha</taxon>
        <taxon>Muroidea</taxon>
        <taxon>Muridae</taxon>
        <taxon>Murinae</taxon>
        <taxon>Rattus</taxon>
    </lineage>
</organism>